<feature type="chain" id="PRO_0000257706" description="Succinylglutamate desuccinylase">
    <location>
        <begin position="1"/>
        <end position="349"/>
    </location>
</feature>
<feature type="active site" evidence="1">
    <location>
        <position position="229"/>
    </location>
</feature>
<feature type="binding site" evidence="1">
    <location>
        <position position="70"/>
    </location>
    <ligand>
        <name>Zn(2+)</name>
        <dbReference type="ChEBI" id="CHEBI:29105"/>
    </ligand>
</feature>
<feature type="binding site" evidence="1">
    <location>
        <position position="73"/>
    </location>
    <ligand>
        <name>Zn(2+)</name>
        <dbReference type="ChEBI" id="CHEBI:29105"/>
    </ligand>
</feature>
<feature type="binding site" evidence="1">
    <location>
        <position position="166"/>
    </location>
    <ligand>
        <name>Zn(2+)</name>
        <dbReference type="ChEBI" id="CHEBI:29105"/>
    </ligand>
</feature>
<reference key="1">
    <citation type="journal article" date="2004" name="Proc. Natl. Acad. Sci. U.S.A.">
        <title>Genomic plasticity of the causative agent of melioidosis, Burkholderia pseudomallei.</title>
        <authorList>
            <person name="Holden M.T.G."/>
            <person name="Titball R.W."/>
            <person name="Peacock S.J."/>
            <person name="Cerdeno-Tarraga A.-M."/>
            <person name="Atkins T."/>
            <person name="Crossman L.C."/>
            <person name="Pitt T."/>
            <person name="Churcher C."/>
            <person name="Mungall K.L."/>
            <person name="Bentley S.D."/>
            <person name="Sebaihia M."/>
            <person name="Thomson N.R."/>
            <person name="Bason N."/>
            <person name="Beacham I.R."/>
            <person name="Brooks K."/>
            <person name="Brown K.A."/>
            <person name="Brown N.F."/>
            <person name="Challis G.L."/>
            <person name="Cherevach I."/>
            <person name="Chillingworth T."/>
            <person name="Cronin A."/>
            <person name="Crossett B."/>
            <person name="Davis P."/>
            <person name="DeShazer D."/>
            <person name="Feltwell T."/>
            <person name="Fraser A."/>
            <person name="Hance Z."/>
            <person name="Hauser H."/>
            <person name="Holroyd S."/>
            <person name="Jagels K."/>
            <person name="Keith K.E."/>
            <person name="Maddison M."/>
            <person name="Moule S."/>
            <person name="Price C."/>
            <person name="Quail M.A."/>
            <person name="Rabbinowitsch E."/>
            <person name="Rutherford K."/>
            <person name="Sanders M."/>
            <person name="Simmonds M."/>
            <person name="Songsivilai S."/>
            <person name="Stevens K."/>
            <person name="Tumapa S."/>
            <person name="Vesaratchavest M."/>
            <person name="Whitehead S."/>
            <person name="Yeats C."/>
            <person name="Barrell B.G."/>
            <person name="Oyston P.C.F."/>
            <person name="Parkhill J."/>
        </authorList>
    </citation>
    <scope>NUCLEOTIDE SEQUENCE [LARGE SCALE GENOMIC DNA]</scope>
    <source>
        <strain>K96243</strain>
    </source>
</reference>
<proteinExistence type="inferred from homology"/>
<name>ASTE_BURPS</name>
<protein>
    <recommendedName>
        <fullName evidence="1">Succinylglutamate desuccinylase</fullName>
        <ecNumber evidence="1">3.5.1.96</ecNumber>
    </recommendedName>
</protein>
<gene>
    <name evidence="1" type="primary">astE</name>
    <name type="ordered locus">BPSL2385</name>
</gene>
<evidence type="ECO:0000255" key="1">
    <source>
        <dbReference type="HAMAP-Rule" id="MF_00767"/>
    </source>
</evidence>
<keyword id="KW-0056">Arginine metabolism</keyword>
<keyword id="KW-0378">Hydrolase</keyword>
<keyword id="KW-0479">Metal-binding</keyword>
<keyword id="KW-1185">Reference proteome</keyword>
<keyword id="KW-0862">Zinc</keyword>
<dbReference type="EC" id="3.5.1.96" evidence="1"/>
<dbReference type="EMBL" id="BX571965">
    <property type="protein sequence ID" value="CAH36387.1"/>
    <property type="molecule type" value="Genomic_DNA"/>
</dbReference>
<dbReference type="RefSeq" id="WP_004524649.1">
    <property type="nucleotide sequence ID" value="NZ_CP009538.1"/>
</dbReference>
<dbReference type="RefSeq" id="YP_108977.1">
    <property type="nucleotide sequence ID" value="NC_006350.1"/>
</dbReference>
<dbReference type="SMR" id="Q63SD9"/>
<dbReference type="STRING" id="272560.BPSL2385"/>
<dbReference type="GeneID" id="93060960"/>
<dbReference type="KEGG" id="bps:BPSL2385"/>
<dbReference type="PATRIC" id="fig|272560.51.peg.3017"/>
<dbReference type="eggNOG" id="COG2988">
    <property type="taxonomic scope" value="Bacteria"/>
</dbReference>
<dbReference type="UniPathway" id="UPA00185">
    <property type="reaction ID" value="UER00283"/>
</dbReference>
<dbReference type="Proteomes" id="UP000000605">
    <property type="component" value="Chromosome 1"/>
</dbReference>
<dbReference type="GO" id="GO:0016788">
    <property type="term" value="F:hydrolase activity, acting on ester bonds"/>
    <property type="evidence" value="ECO:0007669"/>
    <property type="project" value="UniProtKB-UniRule"/>
</dbReference>
<dbReference type="GO" id="GO:0009017">
    <property type="term" value="F:succinylglutamate desuccinylase activity"/>
    <property type="evidence" value="ECO:0007669"/>
    <property type="project" value="UniProtKB-EC"/>
</dbReference>
<dbReference type="GO" id="GO:0008270">
    <property type="term" value="F:zinc ion binding"/>
    <property type="evidence" value="ECO:0007669"/>
    <property type="project" value="UniProtKB-UniRule"/>
</dbReference>
<dbReference type="GO" id="GO:0019544">
    <property type="term" value="P:arginine catabolic process to glutamate"/>
    <property type="evidence" value="ECO:0007669"/>
    <property type="project" value="UniProtKB-UniRule"/>
</dbReference>
<dbReference type="GO" id="GO:0019545">
    <property type="term" value="P:arginine catabolic process to succinate"/>
    <property type="evidence" value="ECO:0007669"/>
    <property type="project" value="UniProtKB-UniRule"/>
</dbReference>
<dbReference type="CDD" id="cd03855">
    <property type="entry name" value="M14_ASTE"/>
    <property type="match status" value="1"/>
</dbReference>
<dbReference type="Gene3D" id="3.40.630.10">
    <property type="entry name" value="Zn peptidases"/>
    <property type="match status" value="1"/>
</dbReference>
<dbReference type="HAMAP" id="MF_00767">
    <property type="entry name" value="Arg_catab_AstE"/>
    <property type="match status" value="1"/>
</dbReference>
<dbReference type="InterPro" id="IPR050178">
    <property type="entry name" value="AspA/AstE_fam"/>
</dbReference>
<dbReference type="InterPro" id="IPR055438">
    <property type="entry name" value="AstE_AspA_cat"/>
</dbReference>
<dbReference type="InterPro" id="IPR007036">
    <property type="entry name" value="Aste_AspA_hybrid_dom"/>
</dbReference>
<dbReference type="InterPro" id="IPR016681">
    <property type="entry name" value="SuccinylGlu_desuccinylase"/>
</dbReference>
<dbReference type="NCBIfam" id="TIGR03242">
    <property type="entry name" value="arg_catab_astE"/>
    <property type="match status" value="1"/>
</dbReference>
<dbReference type="NCBIfam" id="NF003706">
    <property type="entry name" value="PRK05324.1"/>
    <property type="match status" value="1"/>
</dbReference>
<dbReference type="PANTHER" id="PTHR15162">
    <property type="entry name" value="ASPARTOACYLASE"/>
    <property type="match status" value="1"/>
</dbReference>
<dbReference type="PANTHER" id="PTHR15162:SF7">
    <property type="entry name" value="SUCCINYLGLUTAMATE DESUCCINYLASE"/>
    <property type="match status" value="1"/>
</dbReference>
<dbReference type="Pfam" id="PF24827">
    <property type="entry name" value="AstE_AspA_cat"/>
    <property type="match status" value="1"/>
</dbReference>
<dbReference type="Pfam" id="PF04952">
    <property type="entry name" value="AstE_AspA_hybrid"/>
    <property type="match status" value="1"/>
</dbReference>
<dbReference type="PIRSF" id="PIRSF017020">
    <property type="entry name" value="AstE"/>
    <property type="match status" value="1"/>
</dbReference>
<dbReference type="SUPFAM" id="SSF53187">
    <property type="entry name" value="Zn-dependent exopeptidases"/>
    <property type="match status" value="1"/>
</dbReference>
<sequence length="349" mass="37592">MTSSADSGRDAAWLDDFLALTLAGDAPPAEAGECAARAVRWRWLGDGLLRLEPADAAQRMQSVLVSAGVHGDETAPIELLSTLVRDIARGALPLRCRLLVALGNPGAMRAGERYLDDDLNRLFGGRHAQLAASREAPRAAQLEAAAALFFSTAGRARGARWHIDMHTAIRASVFEQFALLPHTGEPPTRTMFEWLGEAQIAAVLLHTTKGSTFSHFTAQACGALACTLELGKVMPFGANDLSRFAPADAAVRRLVSGRRDAPRGALPRAFTVVDQITKQSDALELFVANDVPNFTPFARGTLLARDGDYRYAVRHEQERIVFPNPSVKPGLRAGLLVIETTRDTHAALA</sequence>
<comment type="function">
    <text evidence="1">Transforms N(2)-succinylglutamate into succinate and glutamate.</text>
</comment>
<comment type="catalytic activity">
    <reaction evidence="1">
        <text>N-succinyl-L-glutamate + H2O = L-glutamate + succinate</text>
        <dbReference type="Rhea" id="RHEA:15169"/>
        <dbReference type="ChEBI" id="CHEBI:15377"/>
        <dbReference type="ChEBI" id="CHEBI:29985"/>
        <dbReference type="ChEBI" id="CHEBI:30031"/>
        <dbReference type="ChEBI" id="CHEBI:58763"/>
        <dbReference type="EC" id="3.5.1.96"/>
    </reaction>
</comment>
<comment type="cofactor">
    <cofactor evidence="1">
        <name>Zn(2+)</name>
        <dbReference type="ChEBI" id="CHEBI:29105"/>
    </cofactor>
    <text evidence="1">Binds 1 zinc ion per subunit.</text>
</comment>
<comment type="pathway">
    <text evidence="1">Amino-acid degradation; L-arginine degradation via AST pathway; L-glutamate and succinate from L-arginine: step 5/5.</text>
</comment>
<comment type="similarity">
    <text evidence="1">Belongs to the AspA/AstE family. Succinylglutamate desuccinylase subfamily.</text>
</comment>
<accession>Q63SD9</accession>
<organism>
    <name type="scientific">Burkholderia pseudomallei (strain K96243)</name>
    <dbReference type="NCBI Taxonomy" id="272560"/>
    <lineage>
        <taxon>Bacteria</taxon>
        <taxon>Pseudomonadati</taxon>
        <taxon>Pseudomonadota</taxon>
        <taxon>Betaproteobacteria</taxon>
        <taxon>Burkholderiales</taxon>
        <taxon>Burkholderiaceae</taxon>
        <taxon>Burkholderia</taxon>
        <taxon>pseudomallei group</taxon>
    </lineage>
</organism>